<feature type="initiator methionine" description="Removed" evidence="5">
    <location>
        <position position="1"/>
    </location>
</feature>
<feature type="chain" id="PRO_0000136069" description="Quinate/shikimate dehydrogenase">
    <location>
        <begin position="2"/>
        <end position="288"/>
    </location>
</feature>
<feature type="binding site" evidence="1">
    <location>
        <position position="71"/>
    </location>
    <ligand>
        <name>substrate</name>
    </ligand>
</feature>
<feature type="binding site" evidence="1">
    <location>
        <position position="107"/>
    </location>
    <ligand>
        <name>substrate</name>
    </ligand>
</feature>
<feature type="binding site" evidence="1 2 3 5">
    <location>
        <begin position="132"/>
        <end position="135"/>
    </location>
    <ligand>
        <name>NAD(+)</name>
        <dbReference type="ChEBI" id="CHEBI:57540"/>
    </ligand>
</feature>
<feature type="binding site" evidence="1 2 3 5">
    <location>
        <begin position="155"/>
        <end position="158"/>
    </location>
    <ligand>
        <name>NAD(+)</name>
        <dbReference type="ChEBI" id="CHEBI:57540"/>
    </ligand>
</feature>
<feature type="binding site" evidence="1 2 3 5">
    <location>
        <position position="205"/>
    </location>
    <ligand>
        <name>NAD(+)</name>
        <dbReference type="ChEBI" id="CHEBI:57540"/>
    </ligand>
</feature>
<feature type="binding site" evidence="1 2 3 5">
    <location>
        <begin position="232"/>
        <end position="235"/>
    </location>
    <ligand>
        <name>NAD(+)</name>
        <dbReference type="ChEBI" id="CHEBI:57540"/>
    </ligand>
</feature>
<feature type="binding site" evidence="1 2 3 5">
    <location>
        <position position="255"/>
    </location>
    <ligand>
        <name>NAD(+)</name>
        <dbReference type="ChEBI" id="CHEBI:57540"/>
    </ligand>
</feature>
<feature type="mutagenesis site" description="Kinetically unchanged as compared with the wild-type." evidence="4">
    <original>S</original>
    <variation>A</variation>
    <location>
        <position position="22"/>
    </location>
</feature>
<feature type="mutagenesis site" description="Kinetically unchanged as compared with the wild-type." evidence="4">
    <original>Y</original>
    <variation>F</variation>
    <location>
        <position position="39"/>
    </location>
</feature>
<feature type="mutagenesis site" description="Reduces activity towards quinate about 6-fold, but has a little effect on shikimate conversion." evidence="4">
    <original>S</original>
    <variation>A</variation>
    <location>
        <position position="67"/>
    </location>
</feature>
<feature type="mutagenesis site" description="3200-fold decrease in the affinity for quinate. 170-fold decrease in the affinity for shikimate." evidence="4">
    <original>K</original>
    <variation>A</variation>
    <location>
        <position position="71"/>
    </location>
</feature>
<feature type="mutagenesis site" description="10-fold greater reduction in catalytic efficiency is observed with quinate than with shikimate." evidence="4">
    <original>K</original>
    <variation>G</variation>
    <location>
        <position position="71"/>
    </location>
</feature>
<feature type="mutagenesis site" description="Alters protein structure. Loss of activity for both substrates." evidence="4">
    <original>N</original>
    <variation>A</variation>
    <location>
        <position position="92"/>
    </location>
</feature>
<feature type="mutagenesis site" description="2000-fold decrease in the affinity for quinate. 70-fold decrease in the affinity for shikimate. 10-fold greater reduction in catalytic efficiency is observed with quinate than with shikimate." evidence="4">
    <original>T</original>
    <variation>A</variation>
    <location>
        <position position="106"/>
    </location>
</feature>
<feature type="mutagenesis site" description="Loss of activity towards quinate. 20000-fold decrease in the affinity for shikimate." evidence="4">
    <original>D</original>
    <variation>A</variation>
    <location>
        <position position="107"/>
    </location>
</feature>
<feature type="mutagenesis site" description="3-fold reduction in catalytic efficiency for both substrates." evidence="4">
    <original>Q</original>
    <variation>A</variation>
    <location>
        <position position="262"/>
    </location>
</feature>
<feature type="strand" evidence="12">
    <location>
        <begin position="8"/>
        <end position="15"/>
    </location>
</feature>
<feature type="helix" evidence="12">
    <location>
        <begin position="22"/>
        <end position="32"/>
    </location>
</feature>
<feature type="strand" evidence="12">
    <location>
        <begin position="36"/>
        <end position="43"/>
    </location>
</feature>
<feature type="turn" evidence="12">
    <location>
        <begin position="46"/>
        <end position="48"/>
    </location>
</feature>
<feature type="helix" evidence="12">
    <location>
        <begin position="49"/>
        <end position="58"/>
    </location>
</feature>
<feature type="strand" evidence="12">
    <location>
        <begin position="63"/>
        <end position="66"/>
    </location>
</feature>
<feature type="helix" evidence="12">
    <location>
        <begin position="73"/>
        <end position="77"/>
    </location>
</feature>
<feature type="strand" evidence="12">
    <location>
        <begin position="79"/>
        <end position="81"/>
    </location>
</feature>
<feature type="helix" evidence="12">
    <location>
        <begin position="83"/>
        <end position="88"/>
    </location>
</feature>
<feature type="strand" evidence="12">
    <location>
        <begin position="92"/>
        <end position="97"/>
    </location>
</feature>
<feature type="strand" evidence="12">
    <location>
        <begin position="100"/>
        <end position="104"/>
    </location>
</feature>
<feature type="helix" evidence="12">
    <location>
        <begin position="106"/>
        <end position="117"/>
    </location>
</feature>
<feature type="strand" evidence="12">
    <location>
        <begin position="126"/>
        <end position="130"/>
    </location>
</feature>
<feature type="helix" evidence="12">
    <location>
        <begin position="134"/>
        <end position="145"/>
    </location>
</feature>
<feature type="strand" evidence="12">
    <location>
        <begin position="149"/>
        <end position="155"/>
    </location>
</feature>
<feature type="helix" evidence="12">
    <location>
        <begin position="161"/>
        <end position="174"/>
    </location>
</feature>
<feature type="strand" evidence="12">
    <location>
        <begin position="178"/>
        <end position="183"/>
    </location>
</feature>
<feature type="helix" evidence="12">
    <location>
        <begin position="187"/>
        <end position="195"/>
    </location>
</feature>
<feature type="strand" evidence="12">
    <location>
        <begin position="198"/>
        <end position="202"/>
    </location>
</feature>
<feature type="helix" evidence="12">
    <location>
        <begin position="220"/>
        <end position="222"/>
    </location>
</feature>
<feature type="strand" evidence="12">
    <location>
        <begin position="228"/>
        <end position="231"/>
    </location>
</feature>
<feature type="strand" evidence="12">
    <location>
        <begin position="235"/>
        <end position="238"/>
    </location>
</feature>
<feature type="helix" evidence="12">
    <location>
        <begin position="240"/>
        <end position="246"/>
    </location>
</feature>
<feature type="turn" evidence="12">
    <location>
        <begin position="247"/>
        <end position="249"/>
    </location>
</feature>
<feature type="strand" evidence="12">
    <location>
        <begin position="251"/>
        <end position="253"/>
    </location>
</feature>
<feature type="helix" evidence="12">
    <location>
        <begin position="255"/>
        <end position="271"/>
    </location>
</feature>
<feature type="helix" evidence="12">
    <location>
        <begin position="277"/>
        <end position="284"/>
    </location>
</feature>
<evidence type="ECO:0000255" key="1">
    <source>
        <dbReference type="HAMAP-Rule" id="MF_01578"/>
    </source>
</evidence>
<evidence type="ECO:0000269" key="2">
    <source>
    </source>
</evidence>
<evidence type="ECO:0000269" key="3">
    <source>
    </source>
</evidence>
<evidence type="ECO:0000269" key="4">
    <source>
    </source>
</evidence>
<evidence type="ECO:0000269" key="5">
    <source>
    </source>
</evidence>
<evidence type="ECO:0000269" key="6">
    <source>
    </source>
</evidence>
<evidence type="ECO:0000269" key="7">
    <source>
    </source>
</evidence>
<evidence type="ECO:0000303" key="8">
    <source>
    </source>
</evidence>
<evidence type="ECO:0000305" key="9"/>
<evidence type="ECO:0000312" key="10">
    <source>
        <dbReference type="EMBL" id="AAC74762.1"/>
    </source>
</evidence>
<evidence type="ECO:0000312" key="11">
    <source>
        <dbReference type="EMBL" id="BAA15449.1"/>
    </source>
</evidence>
<evidence type="ECO:0007829" key="12">
    <source>
        <dbReference type="PDB" id="1VI2"/>
    </source>
</evidence>
<name>YDIB_ECOLI</name>
<dbReference type="EC" id="1.1.1.282" evidence="1 3 4"/>
<dbReference type="EMBL" id="U00096">
    <property type="protein sequence ID" value="AAC74762.1"/>
    <property type="molecule type" value="Genomic_DNA"/>
</dbReference>
<dbReference type="EMBL" id="AP009048">
    <property type="protein sequence ID" value="BAA15449.1"/>
    <property type="molecule type" value="Genomic_DNA"/>
</dbReference>
<dbReference type="EMBL" id="X04306">
    <property type="protein sequence ID" value="CAA27848.1"/>
    <property type="status" value="ALT_FRAME"/>
    <property type="molecule type" value="Genomic_DNA"/>
</dbReference>
<dbReference type="PIR" id="D64927">
    <property type="entry name" value="D64927"/>
</dbReference>
<dbReference type="RefSeq" id="NP_416207.1">
    <property type="nucleotide sequence ID" value="NC_000913.3"/>
</dbReference>
<dbReference type="RefSeq" id="WP_000383469.1">
    <property type="nucleotide sequence ID" value="NZ_SSZK01000001.1"/>
</dbReference>
<dbReference type="PDB" id="1NPD">
    <property type="method" value="X-ray"/>
    <property type="resolution" value="2.30 A"/>
    <property type="chains" value="A/B=1-288"/>
</dbReference>
<dbReference type="PDB" id="1O9B">
    <property type="method" value="X-ray"/>
    <property type="resolution" value="2.50 A"/>
    <property type="chains" value="A/B=1-288"/>
</dbReference>
<dbReference type="PDB" id="1VI2">
    <property type="method" value="X-ray"/>
    <property type="resolution" value="2.10 A"/>
    <property type="chains" value="A/B=2-288"/>
</dbReference>
<dbReference type="PDBsum" id="1NPD"/>
<dbReference type="PDBsum" id="1O9B"/>
<dbReference type="PDBsum" id="1VI2"/>
<dbReference type="SMR" id="P0A6D5"/>
<dbReference type="BioGRID" id="4263505">
    <property type="interactions" value="8"/>
</dbReference>
<dbReference type="DIP" id="DIP-47967N"/>
<dbReference type="FunCoup" id="P0A6D5">
    <property type="interactions" value="230"/>
</dbReference>
<dbReference type="IntAct" id="P0A6D5">
    <property type="interactions" value="3"/>
</dbReference>
<dbReference type="STRING" id="511145.b1692"/>
<dbReference type="PaxDb" id="511145-b1692"/>
<dbReference type="EnsemblBacteria" id="AAC74762">
    <property type="protein sequence ID" value="AAC74762"/>
    <property type="gene ID" value="b1692"/>
</dbReference>
<dbReference type="GeneID" id="75171755"/>
<dbReference type="GeneID" id="946200"/>
<dbReference type="KEGG" id="ecj:JW1682"/>
<dbReference type="KEGG" id="eco:b1692"/>
<dbReference type="KEGG" id="ecoc:C3026_09690"/>
<dbReference type="PATRIC" id="fig|1411691.4.peg.566"/>
<dbReference type="EchoBASE" id="EB1216"/>
<dbReference type="eggNOG" id="COG0169">
    <property type="taxonomic scope" value="Bacteria"/>
</dbReference>
<dbReference type="HOGENOM" id="CLU_044063_4_4_6"/>
<dbReference type="InParanoid" id="P0A6D5"/>
<dbReference type="OMA" id="AIYVMRR"/>
<dbReference type="OrthoDB" id="9792692at2"/>
<dbReference type="PhylomeDB" id="P0A6D5"/>
<dbReference type="BioCyc" id="EcoCyc:EG11234-MONOMER"/>
<dbReference type="BioCyc" id="MetaCyc:EG11234-MONOMER"/>
<dbReference type="BRENDA" id="1.1.1.25">
    <property type="organism ID" value="2026"/>
</dbReference>
<dbReference type="BRENDA" id="1.1.1.282">
    <property type="organism ID" value="2026"/>
</dbReference>
<dbReference type="SABIO-RK" id="P0A6D5"/>
<dbReference type="UniPathway" id="UPA00053">
    <property type="reaction ID" value="UER00087"/>
</dbReference>
<dbReference type="EvolutionaryTrace" id="P0A6D5"/>
<dbReference type="PRO" id="PR:P0A6D5"/>
<dbReference type="Proteomes" id="UP000000625">
    <property type="component" value="Chromosome"/>
</dbReference>
<dbReference type="GO" id="GO:0042803">
    <property type="term" value="F:protein homodimerization activity"/>
    <property type="evidence" value="ECO:0000314"/>
    <property type="project" value="EcoCyc"/>
</dbReference>
<dbReference type="GO" id="GO:0030266">
    <property type="term" value="F:quinate 3-dehydrogenase (NAD+) activity"/>
    <property type="evidence" value="ECO:0000314"/>
    <property type="project" value="EcoCyc"/>
</dbReference>
<dbReference type="GO" id="GO:0052733">
    <property type="term" value="F:quinate 3-dehydrogenase (NADP+) activity"/>
    <property type="evidence" value="ECO:0007669"/>
    <property type="project" value="InterPro"/>
</dbReference>
<dbReference type="GO" id="GO:0052734">
    <property type="term" value="F:shikimate 3-dehydrogenase (NAD+) activity"/>
    <property type="evidence" value="ECO:0000314"/>
    <property type="project" value="EcoCyc"/>
</dbReference>
<dbReference type="GO" id="GO:0004764">
    <property type="term" value="F:shikimate 3-dehydrogenase (NADP+) activity"/>
    <property type="evidence" value="ECO:0000314"/>
    <property type="project" value="EcoCyc"/>
</dbReference>
<dbReference type="GO" id="GO:0008652">
    <property type="term" value="P:amino acid biosynthetic process"/>
    <property type="evidence" value="ECO:0007669"/>
    <property type="project" value="UniProtKB-KW"/>
</dbReference>
<dbReference type="GO" id="GO:0009073">
    <property type="term" value="P:aromatic amino acid family biosynthetic process"/>
    <property type="evidence" value="ECO:0007669"/>
    <property type="project" value="UniProtKB-KW"/>
</dbReference>
<dbReference type="GO" id="GO:0009423">
    <property type="term" value="P:chorismate biosynthetic process"/>
    <property type="evidence" value="ECO:0000318"/>
    <property type="project" value="GO_Central"/>
</dbReference>
<dbReference type="GO" id="GO:0019632">
    <property type="term" value="P:shikimate metabolic process"/>
    <property type="evidence" value="ECO:0000318"/>
    <property type="project" value="GO_Central"/>
</dbReference>
<dbReference type="CDD" id="cd01065">
    <property type="entry name" value="NAD_bind_Shikimate_DH"/>
    <property type="match status" value="1"/>
</dbReference>
<dbReference type="FunFam" id="3.40.50.10860:FF:000004">
    <property type="entry name" value="Quinate/shikimate dehydrogenase"/>
    <property type="match status" value="1"/>
</dbReference>
<dbReference type="FunFam" id="3.40.50.720:FF:000086">
    <property type="entry name" value="Quinate/shikimate dehydrogenase"/>
    <property type="match status" value="1"/>
</dbReference>
<dbReference type="Gene3D" id="3.40.50.10860">
    <property type="entry name" value="Leucine Dehydrogenase, chain A, domain 1"/>
    <property type="match status" value="1"/>
</dbReference>
<dbReference type="Gene3D" id="3.40.50.720">
    <property type="entry name" value="NAD(P)-binding Rossmann-like Domain"/>
    <property type="match status" value="1"/>
</dbReference>
<dbReference type="HAMAP" id="MF_00222">
    <property type="entry name" value="Shikimate_DH_AroE"/>
    <property type="match status" value="1"/>
</dbReference>
<dbReference type="HAMAP" id="MF_01578">
    <property type="entry name" value="Shikimate_DH_YdiB"/>
    <property type="match status" value="1"/>
</dbReference>
<dbReference type="InterPro" id="IPR046346">
    <property type="entry name" value="Aminoacid_DH-like_N_sf"/>
</dbReference>
<dbReference type="InterPro" id="IPR036291">
    <property type="entry name" value="NAD(P)-bd_dom_sf"/>
</dbReference>
<dbReference type="InterPro" id="IPR022872">
    <property type="entry name" value="Quinate/Shikimate_DH"/>
</dbReference>
<dbReference type="InterPro" id="IPR041121">
    <property type="entry name" value="SDH_C"/>
</dbReference>
<dbReference type="InterPro" id="IPR013708">
    <property type="entry name" value="Shikimate_DH-bd_N"/>
</dbReference>
<dbReference type="InterPro" id="IPR022893">
    <property type="entry name" value="Shikimate_DH_fam"/>
</dbReference>
<dbReference type="NCBIfam" id="NF009390">
    <property type="entry name" value="PRK12749.1"/>
    <property type="match status" value="1"/>
</dbReference>
<dbReference type="PANTHER" id="PTHR21089:SF1">
    <property type="entry name" value="BIFUNCTIONAL 3-DEHYDROQUINATE DEHYDRATASE_SHIKIMATE DEHYDROGENASE, CHLOROPLASTIC"/>
    <property type="match status" value="1"/>
</dbReference>
<dbReference type="PANTHER" id="PTHR21089">
    <property type="entry name" value="SHIKIMATE DEHYDROGENASE"/>
    <property type="match status" value="1"/>
</dbReference>
<dbReference type="Pfam" id="PF18317">
    <property type="entry name" value="SDH_C"/>
    <property type="match status" value="1"/>
</dbReference>
<dbReference type="Pfam" id="PF08501">
    <property type="entry name" value="Shikimate_dh_N"/>
    <property type="match status" value="1"/>
</dbReference>
<dbReference type="SUPFAM" id="SSF53223">
    <property type="entry name" value="Aminoacid dehydrogenase-like, N-terminal domain"/>
    <property type="match status" value="1"/>
</dbReference>
<dbReference type="SUPFAM" id="SSF51735">
    <property type="entry name" value="NAD(P)-binding Rossmann-fold domains"/>
    <property type="match status" value="1"/>
</dbReference>
<proteinExistence type="evidence at protein level"/>
<protein>
    <recommendedName>
        <fullName evidence="1 8">Quinate/shikimate dehydrogenase</fullName>
        <ecNumber evidence="1 3 4">1.1.1.282</ecNumber>
    </recommendedName>
    <alternativeName>
        <fullName evidence="1 8">NAD-dependent shikimate 5-dehydrogenase</fullName>
    </alternativeName>
</protein>
<comment type="function">
    <text evidence="1 2 3 4">The actual biological function of YdiB remains unclear, nor is it known whether 3-dehydroshikimate or quinate represents the natural substrate. Catalyzes the reversible NAD-dependent reduction of both 3-dehydroshikimate (DHSA) and 3-dehydroquinate to yield shikimate (SA) and quinate, respectively. It can use both NAD or NADP for catalysis, however it has higher catalytic efficiency with NAD.</text>
</comment>
<comment type="catalytic activity">
    <reaction evidence="1 3 4">
        <text>L-quinate + NAD(+) = 3-dehydroquinate + NADH + H(+)</text>
        <dbReference type="Rhea" id="RHEA:22364"/>
        <dbReference type="ChEBI" id="CHEBI:15378"/>
        <dbReference type="ChEBI" id="CHEBI:29751"/>
        <dbReference type="ChEBI" id="CHEBI:32364"/>
        <dbReference type="ChEBI" id="CHEBI:57540"/>
        <dbReference type="ChEBI" id="CHEBI:57945"/>
        <dbReference type="EC" id="1.1.1.282"/>
    </reaction>
</comment>
<comment type="catalytic activity">
    <reaction evidence="1 3 4">
        <text>L-quinate + NADP(+) = 3-dehydroquinate + NADPH + H(+)</text>
        <dbReference type="Rhea" id="RHEA:18425"/>
        <dbReference type="ChEBI" id="CHEBI:15378"/>
        <dbReference type="ChEBI" id="CHEBI:29751"/>
        <dbReference type="ChEBI" id="CHEBI:32364"/>
        <dbReference type="ChEBI" id="CHEBI:57783"/>
        <dbReference type="ChEBI" id="CHEBI:58349"/>
        <dbReference type="EC" id="1.1.1.282"/>
    </reaction>
</comment>
<comment type="catalytic activity">
    <reaction evidence="1 3 4">
        <text>shikimate + NADP(+) = 3-dehydroshikimate + NADPH + H(+)</text>
        <dbReference type="Rhea" id="RHEA:17737"/>
        <dbReference type="ChEBI" id="CHEBI:15378"/>
        <dbReference type="ChEBI" id="CHEBI:16630"/>
        <dbReference type="ChEBI" id="CHEBI:36208"/>
        <dbReference type="ChEBI" id="CHEBI:57783"/>
        <dbReference type="ChEBI" id="CHEBI:58349"/>
        <dbReference type="EC" id="1.1.1.282"/>
    </reaction>
</comment>
<comment type="catalytic activity">
    <reaction evidence="1 3 4">
        <text>shikimate + NAD(+) = 3-dehydroshikimate + NADH + H(+)</text>
        <dbReference type="Rhea" id="RHEA:17741"/>
        <dbReference type="ChEBI" id="CHEBI:15378"/>
        <dbReference type="ChEBI" id="CHEBI:16630"/>
        <dbReference type="ChEBI" id="CHEBI:36208"/>
        <dbReference type="ChEBI" id="CHEBI:57540"/>
        <dbReference type="ChEBI" id="CHEBI:57945"/>
        <dbReference type="EC" id="1.1.1.282"/>
    </reaction>
</comment>
<comment type="biophysicochemical properties">
    <kinetics>
        <KM evidence="4">2.9 uM for shikimate (at pH 9 and 20 degrees Celsius)</KM>
        <KM evidence="4">9.1 uM for quinate (at pH 9 and 20 degrees Celsius)</KM>
        <KM evidence="4">12.2 uM for NAD (with shikimate at pH 9 and 20 degrees Celsius)</KM>
        <KM evidence="4">18.4 uM for NAD (with quinate at pH 9 and 20 degrees Celsius)</KM>
        <KM evidence="3">20 uM for shikimate (with NAD at pH 9 and 20 degrees Celsius)</KM>
        <KM evidence="3">41 uM for quinate (with NAD at pH 9 and 20 degrees Celsius)</KM>
        <KM evidence="3">87 uM for NAD (with shikimate at pH 9 and 20 degrees Celsius)</KM>
        <KM evidence="3">100 uM for NADP (with shikimate at pH 9 and 20 degrees Celsius)</KM>
        <KM evidence="3">116 uM for NAD (with quinate at pH 9 and 20 degrees Celsius)</KM>
        <KM evidence="3">120 uM for shikimate (with NADP at pH 9 and 20 degrees Celsius)</KM>
        <KM evidence="3">500 uM for NADP (with quinate at pH 9 and 20 degrees Celsius)</KM>
        <KM evidence="3">555 uM for quinate (with NADP at pH 9 and 20 degrees Celsius)</KM>
        <text>kcat is 91 sec(-1) for dehydrogenase activity with shikimate (at pH 9 and 20 degrees Celsius). kcat is 113 sec(-1) for dehydrogenase activity with quinate (at pH 9 and 20 degrees Celsius). kcat is 105 sec(-1) for dehydrogenase activity with NAD (with shikinate at pH 9 and 20 degrees Celsius). kcat is 142 sec(-1) for dehydrogenase activity with NAD (with quinate at pH 9 and 20 degrees Celsius).</text>
    </kinetics>
</comment>
<comment type="pathway">
    <text evidence="1">Metabolic intermediate biosynthesis; chorismate biosynthesis; chorismate from D-erythrose 4-phosphate and phosphoenolpyruvate: step 4/7.</text>
</comment>
<comment type="subunit">
    <text evidence="1 2 3 5 7">Homodimer.</text>
</comment>
<comment type="interaction">
    <interactant intactId="EBI-560638">
        <id>P0A6D5</id>
    </interactant>
    <interactant intactId="EBI-560654">
        <id>P25894</id>
        <label>loiP</label>
    </interactant>
    <organismsDiffer>false</organismsDiffer>
    <experiments>2</experiments>
</comment>
<comment type="induction">
    <text evidence="6">Induced under carbon limitation but not under phosphate limitation.</text>
</comment>
<comment type="mass spectrometry" mass="31361.0" method="Electrospray" evidence="4"/>
<comment type="similarity">
    <text evidence="1">Belongs to the shikimate dehydrogenase family.</text>
</comment>
<comment type="sequence caution" evidence="9">
    <conflict type="frameshift">
        <sequence resource="EMBL-CDS" id="CAA27848"/>
    </conflict>
</comment>
<accession>P0A6D5</accession>
<accession>P28244</accession>
<accession>P77647</accession>
<organism>
    <name type="scientific">Escherichia coli (strain K12)</name>
    <dbReference type="NCBI Taxonomy" id="83333"/>
    <lineage>
        <taxon>Bacteria</taxon>
        <taxon>Pseudomonadati</taxon>
        <taxon>Pseudomonadota</taxon>
        <taxon>Gammaproteobacteria</taxon>
        <taxon>Enterobacterales</taxon>
        <taxon>Enterobacteriaceae</taxon>
        <taxon>Escherichia</taxon>
    </lineage>
</organism>
<gene>
    <name evidence="1 8" type="primary">ydiB</name>
    <name evidence="10" type="ordered locus">b1692</name>
    <name evidence="11" type="ordered locus">JW1682</name>
</gene>
<keyword id="KW-0002">3D-structure</keyword>
<keyword id="KW-0028">Amino-acid biosynthesis</keyword>
<keyword id="KW-0057">Aromatic amino acid biosynthesis</keyword>
<keyword id="KW-0520">NAD</keyword>
<keyword id="KW-0521">NADP</keyword>
<keyword id="KW-0560">Oxidoreductase</keyword>
<keyword id="KW-1185">Reference proteome</keyword>
<sequence length="288" mass="31228">MDVTAKYELIGLMAYPIRHSLSPEMQNKALEKAGLPFTYMAFEVDNDSFPGAIEGLKALKMRGTGVSMPNKQLACEYVDELTPAAKLVGAINTIVNDDGYLRGYNTDGTGHIRAIKESGFDIKGKTMVLLGAGGASTAIGAQGAIEGLKEIKLFNRRDEFFDKALAFAQRVNENTDCVVTVTDLADQQAFAEALASADILTNGTKVGMKPLENESLVNDISLLHPGLLVTECVYNPHMTKLLQQAQQAGCKTIDGYGMLLWQGAEQFTLWTGKDFPLEYVKQVMGFGA</sequence>
<reference key="1">
    <citation type="journal article" date="1996" name="DNA Res.">
        <title>A 570-kb DNA sequence of the Escherichia coli K-12 genome corresponding to the 28.0-40.1 min region on the linkage map.</title>
        <authorList>
            <person name="Aiba H."/>
            <person name="Baba T."/>
            <person name="Fujita K."/>
            <person name="Hayashi K."/>
            <person name="Inada T."/>
            <person name="Isono K."/>
            <person name="Itoh T."/>
            <person name="Kasai H."/>
            <person name="Kashimoto K."/>
            <person name="Kimura S."/>
            <person name="Kitakawa M."/>
            <person name="Kitagawa M."/>
            <person name="Makino K."/>
            <person name="Miki T."/>
            <person name="Mizobuchi K."/>
            <person name="Mori H."/>
            <person name="Mori T."/>
            <person name="Motomura K."/>
            <person name="Nakade S."/>
            <person name="Nakamura Y."/>
            <person name="Nashimoto H."/>
            <person name="Nishio Y."/>
            <person name="Oshima T."/>
            <person name="Saito N."/>
            <person name="Sampei G."/>
            <person name="Seki Y."/>
            <person name="Sivasundaram S."/>
            <person name="Tagami H."/>
            <person name="Takeda J."/>
            <person name="Takemoto K."/>
            <person name="Takeuchi Y."/>
            <person name="Wada C."/>
            <person name="Yamamoto Y."/>
            <person name="Horiuchi T."/>
        </authorList>
    </citation>
    <scope>NUCLEOTIDE SEQUENCE [LARGE SCALE GENOMIC DNA]</scope>
    <source>
        <strain>K12 / W3110 / ATCC 27325 / DSM 5911</strain>
    </source>
</reference>
<reference key="2">
    <citation type="journal article" date="1997" name="Science">
        <title>The complete genome sequence of Escherichia coli K-12.</title>
        <authorList>
            <person name="Blattner F.R."/>
            <person name="Plunkett G. III"/>
            <person name="Bloch C.A."/>
            <person name="Perna N.T."/>
            <person name="Burland V."/>
            <person name="Riley M."/>
            <person name="Collado-Vides J."/>
            <person name="Glasner J.D."/>
            <person name="Rode C.K."/>
            <person name="Mayhew G.F."/>
            <person name="Gregor J."/>
            <person name="Davis N.W."/>
            <person name="Kirkpatrick H.A."/>
            <person name="Goeden M.A."/>
            <person name="Rose D.J."/>
            <person name="Mau B."/>
            <person name="Shao Y."/>
        </authorList>
    </citation>
    <scope>NUCLEOTIDE SEQUENCE [LARGE SCALE GENOMIC DNA]</scope>
    <source>
        <strain>K12 / MG1655 / ATCC 47076</strain>
    </source>
</reference>
<reference key="3">
    <citation type="journal article" date="2006" name="Mol. Syst. Biol.">
        <title>Highly accurate genome sequences of Escherichia coli K-12 strains MG1655 and W3110.</title>
        <authorList>
            <person name="Hayashi K."/>
            <person name="Morooka N."/>
            <person name="Yamamoto Y."/>
            <person name="Fujita K."/>
            <person name="Isono K."/>
            <person name="Choi S."/>
            <person name="Ohtsubo E."/>
            <person name="Baba T."/>
            <person name="Wanner B.L."/>
            <person name="Mori H."/>
            <person name="Horiuchi T."/>
        </authorList>
    </citation>
    <scope>NUCLEOTIDE SEQUENCE [LARGE SCALE GENOMIC DNA]</scope>
    <source>
        <strain>K12 / W3110 / ATCC 27325 / DSM 5911</strain>
    </source>
</reference>
<reference key="4">
    <citation type="journal article" date="1986" name="Biochem. J.">
        <title>The overexpression and complete amino acid sequence of Escherichia coli 3-dehydroquinase.</title>
        <authorList>
            <person name="Duncan K."/>
            <person name="Chaudhuri S."/>
            <person name="Campbell M.S."/>
            <person name="Coggins J.R."/>
        </authorList>
    </citation>
    <scope>NUCLEOTIDE SEQUENCE [GENOMIC DNA] OF 67-288</scope>
    <scope>FUNCTION</scope>
    <scope>SUBUNIT</scope>
    <source>
        <strain>K12</strain>
    </source>
</reference>
<reference key="5">
    <citation type="journal article" date="2005" name="J. Biol. Chem.">
        <title>Site-directed mutagenesis of the active site region in the quinate/shikimate 5-dehydrogenase YdiB of Escherichia coli.</title>
        <authorList>
            <person name="Lindner H.A."/>
            <person name="Nadeau G."/>
            <person name="Matte A."/>
            <person name="Michel G."/>
            <person name="Menard R."/>
            <person name="Cygler M."/>
        </authorList>
    </citation>
    <scope>FUNCTION</scope>
    <scope>CATALYTIC ACTIVITY</scope>
    <scope>BIOPHYSICOCHEMICAL PROPERTIES</scope>
    <scope>MUTAGENESIS OF SER-22; TYR-39; SER-67; LYS-71; ASN-92; THR-106; ASP-107 AND GLN-262</scope>
    <scope>MASS SPECTROMETRY</scope>
    <scope>SUBSTRATE SPECIFICITY</scope>
</reference>
<reference key="6">
    <citation type="journal article" date="2006" name="J. Biotechnol.">
        <title>Transcriptome analysis of a shikimic acid producing strain of Escherichia coli W3110 grown under carbon- and phosphate-limited conditions.</title>
        <authorList>
            <person name="Johansson L."/>
            <person name="Liden G."/>
        </authorList>
    </citation>
    <scope>INDUCTION</scope>
    <source>
        <strain>K12 / W3110 / ATCC 27325 / DSM 5911</strain>
    </source>
</reference>
<reference key="7">
    <citation type="journal article" date="2003" name="J. Biol. Chem.">
        <title>The 2.3-A crystal structure of the shikimate 5-dehydrogenase orthologue YdiB from Escherichia coli suggests a novel catalytic environment for an NAD-dependent dehydrogenase.</title>
        <authorList>
            <person name="Benach J."/>
            <person name="Lee I."/>
            <person name="Edstrom W."/>
            <person name="Kuzin A.P."/>
            <person name="Chiang Y."/>
            <person name="Acton T.B."/>
            <person name="Montelione G.T."/>
            <person name="Hunt J.F."/>
        </authorList>
    </citation>
    <scope>X-RAY CRYSTALLOGRAPHY (2.3 ANGSTROMS) IN COMPLEX WITH NAD</scope>
    <scope>FUNCTION</scope>
    <scope>SUBUNIT</scope>
</reference>
<reference key="8">
    <citation type="journal article" date="2003" name="J. Biol. Chem.">
        <title>Structures of shikimate dehydrogenase AroE and its paralog YdiB. A common structural framework for different activities.</title>
        <authorList>
            <person name="Michel G."/>
            <person name="Roszak A.W."/>
            <person name="Sauve V."/>
            <person name="Maclean J."/>
            <person name="Matte A."/>
            <person name="Coggins J.R."/>
            <person name="Cygler M."/>
            <person name="Lapthorn A.J."/>
        </authorList>
    </citation>
    <scope>X-RAY CRYSTALLOGRAPHY (2.5 ANGSTROMS) IN COMPLEX WITH NAD</scope>
    <scope>FUNCTION</scope>
    <scope>CATALYTIC ACTIVITY</scope>
    <scope>BIOPHYSICOCHEMICAL PROPERTIES</scope>
    <scope>SUBUNIT</scope>
    <scope>SUBSTRATE SPECIFICITY</scope>
</reference>
<reference key="9">
    <citation type="journal article" date="2005" name="Proteins">
        <title>Structural analysis of a set of proteins resulting from a bacterial genomics project.</title>
        <authorList>
            <person name="Badger J."/>
            <person name="Sauder J.M."/>
            <person name="Adams J.M."/>
            <person name="Antonysamy S."/>
            <person name="Bain K."/>
            <person name="Bergseid M.G."/>
            <person name="Buchanan S.G."/>
            <person name="Buchanan M.D."/>
            <person name="Batiyenko Y."/>
            <person name="Christopher J.A."/>
            <person name="Emtage S."/>
            <person name="Eroshkina A."/>
            <person name="Feil I."/>
            <person name="Furlong E.B."/>
            <person name="Gajiwala K.S."/>
            <person name="Gao X."/>
            <person name="He D."/>
            <person name="Hendle J."/>
            <person name="Huber A."/>
            <person name="Hoda K."/>
            <person name="Kearins P."/>
            <person name="Kissinger C."/>
            <person name="Laubert B."/>
            <person name="Lewis H.A."/>
            <person name="Lin J."/>
            <person name="Loomis K."/>
            <person name="Lorimer D."/>
            <person name="Louie G."/>
            <person name="Maletic M."/>
            <person name="Marsh C.D."/>
            <person name="Miller I."/>
            <person name="Molinari J."/>
            <person name="Muller-Dieckmann H.J."/>
            <person name="Newman J.M."/>
            <person name="Noland B.W."/>
            <person name="Pagarigan B."/>
            <person name="Park F."/>
            <person name="Peat T.S."/>
            <person name="Post K.W."/>
            <person name="Radojicic S."/>
            <person name="Ramos A."/>
            <person name="Romero R."/>
            <person name="Rutter M.E."/>
            <person name="Sanderson W.E."/>
            <person name="Schwinn K.D."/>
            <person name="Tresser J."/>
            <person name="Winhoven J."/>
            <person name="Wright T.A."/>
            <person name="Wu L."/>
            <person name="Xu J."/>
            <person name="Harris T.J.R."/>
        </authorList>
    </citation>
    <scope>X-RAY CRYSTALLOGRAPHY (2.1 ANGSTROMS) OF 2-288 IN COMPLEX WITH NAD</scope>
    <scope>SUBUNIT</scope>
</reference>